<evidence type="ECO:0000255" key="1">
    <source>
        <dbReference type="HAMAP-Rule" id="MF_00044"/>
    </source>
</evidence>
<sequence length="587" mass="65725">MHRYRSHTCGELRASDVGSDVRLSGWLHNRRDLGGILFIDLRDHYGITQLVARPGTPAYEALDKVSKESTVRVDGKVVSRGTENVNPDLPTGEIEVEVSEVELLGAAAPLPFTINAEDGVNEERRLEYRFLDLRRERMHRNILLRTAVISAIRHKMTALGFNEMATPILSATSPEGARDFVVPSRLHPGKFYALPQAPQQFKQLLMISGFDRYFQIAPCFRDEDARADRSPGEFYQLDVEMSFVEQEDVFQPIEKLMTELFEEFGGGRHVTSPFPRIPFREAMLKYGSDKPDLRAQLELVDITDIFEGSEFKAFAGKHVRALPVPDVSGQTRKFFDGLGDYAVEQGAKGLAWVRVGEDGSLTGPIAKFLTEENVAELTKRLSLAPGHAVFFGAGEFDEVSKIMGAVRVEAAKRSGNFEENVFRFCWIVDFPMYEKDEDTGKIDFSHNPFSMPQGGLEALETQDPLDILGWQYDIVCNGVELSSGAIRNHEPEIMLKAFEIAGYDRDTVEEQFAGMLRAFRFGAPPHGGIAPGVDRIVMLLADEPNIRETIAFPLNGNAQDLMMGAPTELDETRLRELHLSVRKPQPK</sequence>
<keyword id="KW-0030">Aminoacyl-tRNA synthetase</keyword>
<keyword id="KW-0067">ATP-binding</keyword>
<keyword id="KW-0963">Cytoplasm</keyword>
<keyword id="KW-0436">Ligase</keyword>
<keyword id="KW-0547">Nucleotide-binding</keyword>
<keyword id="KW-0648">Protein biosynthesis</keyword>
<keyword id="KW-1185">Reference proteome</keyword>
<feature type="chain" id="PRO_0000110951" description="Aspartate--tRNA ligase">
    <location>
        <begin position="1"/>
        <end position="587"/>
    </location>
</feature>
<feature type="region of interest" description="Aspartate" evidence="1">
    <location>
        <begin position="199"/>
        <end position="202"/>
    </location>
</feature>
<feature type="binding site" evidence="1">
    <location>
        <position position="175"/>
    </location>
    <ligand>
        <name>L-aspartate</name>
        <dbReference type="ChEBI" id="CHEBI:29991"/>
    </ligand>
</feature>
<feature type="binding site" evidence="1">
    <location>
        <begin position="221"/>
        <end position="223"/>
    </location>
    <ligand>
        <name>ATP</name>
        <dbReference type="ChEBI" id="CHEBI:30616"/>
    </ligand>
</feature>
<feature type="binding site" evidence="1">
    <location>
        <position position="221"/>
    </location>
    <ligand>
        <name>L-aspartate</name>
        <dbReference type="ChEBI" id="CHEBI:29991"/>
    </ligand>
</feature>
<feature type="binding site" evidence="1">
    <location>
        <position position="446"/>
    </location>
    <ligand>
        <name>L-aspartate</name>
        <dbReference type="ChEBI" id="CHEBI:29991"/>
    </ligand>
</feature>
<feature type="binding site" evidence="1">
    <location>
        <position position="480"/>
    </location>
    <ligand>
        <name>ATP</name>
        <dbReference type="ChEBI" id="CHEBI:30616"/>
    </ligand>
</feature>
<feature type="binding site" evidence="1">
    <location>
        <position position="487"/>
    </location>
    <ligand>
        <name>L-aspartate</name>
        <dbReference type="ChEBI" id="CHEBI:29991"/>
    </ligand>
</feature>
<feature type="binding site" evidence="1">
    <location>
        <begin position="532"/>
        <end position="535"/>
    </location>
    <ligand>
        <name>ATP</name>
        <dbReference type="ChEBI" id="CHEBI:30616"/>
    </ligand>
</feature>
<name>SYD_STRAW</name>
<comment type="function">
    <text evidence="1">Catalyzes the attachment of L-aspartate to tRNA(Asp) in a two-step reaction: L-aspartate is first activated by ATP to form Asp-AMP and then transferred to the acceptor end of tRNA(Asp).</text>
</comment>
<comment type="catalytic activity">
    <reaction evidence="1">
        <text>tRNA(Asp) + L-aspartate + ATP = L-aspartyl-tRNA(Asp) + AMP + diphosphate</text>
        <dbReference type="Rhea" id="RHEA:19649"/>
        <dbReference type="Rhea" id="RHEA-COMP:9660"/>
        <dbReference type="Rhea" id="RHEA-COMP:9678"/>
        <dbReference type="ChEBI" id="CHEBI:29991"/>
        <dbReference type="ChEBI" id="CHEBI:30616"/>
        <dbReference type="ChEBI" id="CHEBI:33019"/>
        <dbReference type="ChEBI" id="CHEBI:78442"/>
        <dbReference type="ChEBI" id="CHEBI:78516"/>
        <dbReference type="ChEBI" id="CHEBI:456215"/>
        <dbReference type="EC" id="6.1.1.12"/>
    </reaction>
</comment>
<comment type="subunit">
    <text evidence="1">Homodimer.</text>
</comment>
<comment type="subcellular location">
    <subcellularLocation>
        <location evidence="1">Cytoplasm</location>
    </subcellularLocation>
</comment>
<comment type="similarity">
    <text evidence="1">Belongs to the class-II aminoacyl-tRNA synthetase family. Type 1 subfamily.</text>
</comment>
<proteinExistence type="inferred from homology"/>
<protein>
    <recommendedName>
        <fullName evidence="1">Aspartate--tRNA ligase</fullName>
        <ecNumber evidence="1">6.1.1.12</ecNumber>
    </recommendedName>
    <alternativeName>
        <fullName evidence="1">Aspartyl-tRNA synthetase</fullName>
        <shortName evidence="1">AspRS</shortName>
    </alternativeName>
</protein>
<reference key="1">
    <citation type="journal article" date="2001" name="Proc. Natl. Acad. Sci. U.S.A.">
        <title>Genome sequence of an industrial microorganism Streptomyces avermitilis: deducing the ability of producing secondary metabolites.</title>
        <authorList>
            <person name="Omura S."/>
            <person name="Ikeda H."/>
            <person name="Ishikawa J."/>
            <person name="Hanamoto A."/>
            <person name="Takahashi C."/>
            <person name="Shinose M."/>
            <person name="Takahashi Y."/>
            <person name="Horikawa H."/>
            <person name="Nakazawa H."/>
            <person name="Osonoe T."/>
            <person name="Kikuchi H."/>
            <person name="Shiba T."/>
            <person name="Sakaki Y."/>
            <person name="Hattori M."/>
        </authorList>
    </citation>
    <scope>NUCLEOTIDE SEQUENCE [LARGE SCALE GENOMIC DNA]</scope>
    <source>
        <strain>ATCC 31267 / DSM 46492 / JCM 5070 / NBRC 14893 / NCIMB 12804 / NRRL 8165 / MA-4680</strain>
    </source>
</reference>
<reference key="2">
    <citation type="journal article" date="2003" name="Nat. Biotechnol.">
        <title>Complete genome sequence and comparative analysis of the industrial microorganism Streptomyces avermitilis.</title>
        <authorList>
            <person name="Ikeda H."/>
            <person name="Ishikawa J."/>
            <person name="Hanamoto A."/>
            <person name="Shinose M."/>
            <person name="Kikuchi H."/>
            <person name="Shiba T."/>
            <person name="Sakaki Y."/>
            <person name="Hattori M."/>
            <person name="Omura S."/>
        </authorList>
    </citation>
    <scope>NUCLEOTIDE SEQUENCE [LARGE SCALE GENOMIC DNA]</scope>
    <source>
        <strain>ATCC 31267 / DSM 46492 / JCM 5070 / NBRC 14893 / NCIMB 12804 / NRRL 8165 / MA-4680</strain>
    </source>
</reference>
<accession>Q82F68</accession>
<dbReference type="EC" id="6.1.1.12" evidence="1"/>
<dbReference type="EMBL" id="BA000030">
    <property type="protein sequence ID" value="BAC72107.1"/>
    <property type="molecule type" value="Genomic_DNA"/>
</dbReference>
<dbReference type="RefSeq" id="WP_010985820.1">
    <property type="nucleotide sequence ID" value="NZ_JZJK01000079.1"/>
</dbReference>
<dbReference type="SMR" id="Q82F68"/>
<dbReference type="GeneID" id="41541476"/>
<dbReference type="KEGG" id="sma:SAVERM_4395"/>
<dbReference type="eggNOG" id="COG0173">
    <property type="taxonomic scope" value="Bacteria"/>
</dbReference>
<dbReference type="HOGENOM" id="CLU_014330_3_2_11"/>
<dbReference type="OrthoDB" id="9802326at2"/>
<dbReference type="Proteomes" id="UP000000428">
    <property type="component" value="Chromosome"/>
</dbReference>
<dbReference type="GO" id="GO:0005737">
    <property type="term" value="C:cytoplasm"/>
    <property type="evidence" value="ECO:0007669"/>
    <property type="project" value="UniProtKB-SubCell"/>
</dbReference>
<dbReference type="GO" id="GO:0004815">
    <property type="term" value="F:aspartate-tRNA ligase activity"/>
    <property type="evidence" value="ECO:0007669"/>
    <property type="project" value="UniProtKB-UniRule"/>
</dbReference>
<dbReference type="GO" id="GO:0005524">
    <property type="term" value="F:ATP binding"/>
    <property type="evidence" value="ECO:0007669"/>
    <property type="project" value="UniProtKB-UniRule"/>
</dbReference>
<dbReference type="GO" id="GO:0003676">
    <property type="term" value="F:nucleic acid binding"/>
    <property type="evidence" value="ECO:0007669"/>
    <property type="project" value="InterPro"/>
</dbReference>
<dbReference type="GO" id="GO:0006422">
    <property type="term" value="P:aspartyl-tRNA aminoacylation"/>
    <property type="evidence" value="ECO:0007669"/>
    <property type="project" value="UniProtKB-UniRule"/>
</dbReference>
<dbReference type="CDD" id="cd00777">
    <property type="entry name" value="AspRS_core"/>
    <property type="match status" value="1"/>
</dbReference>
<dbReference type="CDD" id="cd04317">
    <property type="entry name" value="EcAspRS_like_N"/>
    <property type="match status" value="1"/>
</dbReference>
<dbReference type="Gene3D" id="3.30.930.10">
    <property type="entry name" value="Bira Bifunctional Protein, Domain 2"/>
    <property type="match status" value="1"/>
</dbReference>
<dbReference type="Gene3D" id="3.30.1360.30">
    <property type="entry name" value="GAD-like domain"/>
    <property type="match status" value="1"/>
</dbReference>
<dbReference type="Gene3D" id="2.40.50.140">
    <property type="entry name" value="Nucleic acid-binding proteins"/>
    <property type="match status" value="1"/>
</dbReference>
<dbReference type="HAMAP" id="MF_00044">
    <property type="entry name" value="Asp_tRNA_synth_type1"/>
    <property type="match status" value="1"/>
</dbReference>
<dbReference type="InterPro" id="IPR004364">
    <property type="entry name" value="Aa-tRNA-synt_II"/>
</dbReference>
<dbReference type="InterPro" id="IPR006195">
    <property type="entry name" value="aa-tRNA-synth_II"/>
</dbReference>
<dbReference type="InterPro" id="IPR045864">
    <property type="entry name" value="aa-tRNA-synth_II/BPL/LPL"/>
</dbReference>
<dbReference type="InterPro" id="IPR004524">
    <property type="entry name" value="Asp-tRNA-ligase_1"/>
</dbReference>
<dbReference type="InterPro" id="IPR047089">
    <property type="entry name" value="Asp-tRNA-ligase_1_N"/>
</dbReference>
<dbReference type="InterPro" id="IPR002312">
    <property type="entry name" value="Asp/Asn-tRNA-synth_IIb"/>
</dbReference>
<dbReference type="InterPro" id="IPR047090">
    <property type="entry name" value="AspRS_core"/>
</dbReference>
<dbReference type="InterPro" id="IPR004115">
    <property type="entry name" value="GAD-like_sf"/>
</dbReference>
<dbReference type="InterPro" id="IPR029351">
    <property type="entry name" value="GAD_dom"/>
</dbReference>
<dbReference type="InterPro" id="IPR012340">
    <property type="entry name" value="NA-bd_OB-fold"/>
</dbReference>
<dbReference type="InterPro" id="IPR004365">
    <property type="entry name" value="NA-bd_OB_tRNA"/>
</dbReference>
<dbReference type="NCBIfam" id="TIGR00459">
    <property type="entry name" value="aspS_bact"/>
    <property type="match status" value="1"/>
</dbReference>
<dbReference type="NCBIfam" id="NF001750">
    <property type="entry name" value="PRK00476.1"/>
    <property type="match status" value="1"/>
</dbReference>
<dbReference type="PANTHER" id="PTHR22594:SF5">
    <property type="entry name" value="ASPARTATE--TRNA LIGASE, MITOCHONDRIAL"/>
    <property type="match status" value="1"/>
</dbReference>
<dbReference type="PANTHER" id="PTHR22594">
    <property type="entry name" value="ASPARTYL/LYSYL-TRNA SYNTHETASE"/>
    <property type="match status" value="1"/>
</dbReference>
<dbReference type="Pfam" id="PF02938">
    <property type="entry name" value="GAD"/>
    <property type="match status" value="1"/>
</dbReference>
<dbReference type="Pfam" id="PF00152">
    <property type="entry name" value="tRNA-synt_2"/>
    <property type="match status" value="1"/>
</dbReference>
<dbReference type="Pfam" id="PF01336">
    <property type="entry name" value="tRNA_anti-codon"/>
    <property type="match status" value="1"/>
</dbReference>
<dbReference type="PRINTS" id="PR01042">
    <property type="entry name" value="TRNASYNTHASP"/>
</dbReference>
<dbReference type="SUPFAM" id="SSF55681">
    <property type="entry name" value="Class II aaRS and biotin synthetases"/>
    <property type="match status" value="1"/>
</dbReference>
<dbReference type="SUPFAM" id="SSF55261">
    <property type="entry name" value="GAD domain-like"/>
    <property type="match status" value="1"/>
</dbReference>
<dbReference type="SUPFAM" id="SSF50249">
    <property type="entry name" value="Nucleic acid-binding proteins"/>
    <property type="match status" value="1"/>
</dbReference>
<dbReference type="PROSITE" id="PS50862">
    <property type="entry name" value="AA_TRNA_LIGASE_II"/>
    <property type="match status" value="1"/>
</dbReference>
<organism>
    <name type="scientific">Streptomyces avermitilis (strain ATCC 31267 / DSM 46492 / JCM 5070 / NBRC 14893 / NCIMB 12804 / NRRL 8165 / MA-4680)</name>
    <dbReference type="NCBI Taxonomy" id="227882"/>
    <lineage>
        <taxon>Bacteria</taxon>
        <taxon>Bacillati</taxon>
        <taxon>Actinomycetota</taxon>
        <taxon>Actinomycetes</taxon>
        <taxon>Kitasatosporales</taxon>
        <taxon>Streptomycetaceae</taxon>
        <taxon>Streptomyces</taxon>
    </lineage>
</organism>
<gene>
    <name evidence="1" type="primary">aspS</name>
    <name type="ordered locus">SAV_4395</name>
</gene>